<proteinExistence type="inferred from homology"/>
<feature type="chain" id="PRO_0000195617" description="Tryptophanase">
    <location>
        <begin position="1"/>
        <end position="466"/>
    </location>
</feature>
<feature type="modified residue" description="N6-(pyridoxal phosphate)lysine" evidence="1">
    <location>
        <position position="265"/>
    </location>
</feature>
<protein>
    <recommendedName>
        <fullName evidence="1">Tryptophanase</fullName>
        <ecNumber evidence="1">4.1.99.1</ecNumber>
    </recommendedName>
    <alternativeName>
        <fullName evidence="1">L-tryptophan indole-lyase</fullName>
        <shortName evidence="1">TNase</shortName>
    </alternativeName>
</protein>
<keyword id="KW-0456">Lyase</keyword>
<keyword id="KW-0663">Pyridoxal phosphate</keyword>
<keyword id="KW-1185">Reference proteome</keyword>
<keyword id="KW-0823">Tryptophan catabolism</keyword>
<name>TNAA_PHOLL</name>
<sequence length="466" mass="52277">MKRIPEPFRIKMVENIRMTTRAEREKALEEAGYNPFLLPSDAVYIDLLTDSGTGAMSDRQWAGIMMGDEAYAGSRNYYHLCDKVNELIGYQYTIPTHQGRGAEQILFPTLIARKKAQGGATHPVFISNFHFDTTAAHVELNGAKAINVVTSKAFDTTTYYDWKGDFDIDELEKTIAEHGADNVVAIITTVTCNSSGGQPISLANMKAVYEIAKQHDIPVVIDSARFCENAWFIKQREKGYENKSVKQIVKEMYQYGDMLTMSAKKDPLVNIGGLCCFRDDEDLFNEVRTRCVPMEGFVTYGGLAGRDMEALAIGLEEGMNEGYLAYRINQVAYLGNRLRDAGIPIQYPTGGHAVFVDAKLLLPHIPGEQFPAHALNNELYLEAGIRSVEIGSLLLGRDPKTGKQKPSPMELLRLTIPRRVYTNDHMDYVVEAFISLKERIPQIKGLTFTYEPSVLRHFVARLKPIK</sequence>
<reference key="1">
    <citation type="journal article" date="2003" name="Nat. Biotechnol.">
        <title>The genome sequence of the entomopathogenic bacterium Photorhabdus luminescens.</title>
        <authorList>
            <person name="Duchaud E."/>
            <person name="Rusniok C."/>
            <person name="Frangeul L."/>
            <person name="Buchrieser C."/>
            <person name="Givaudan A."/>
            <person name="Taourit S."/>
            <person name="Bocs S."/>
            <person name="Boursaux-Eude C."/>
            <person name="Chandler M."/>
            <person name="Charles J.-F."/>
            <person name="Dassa E."/>
            <person name="Derose R."/>
            <person name="Derzelle S."/>
            <person name="Freyssinet G."/>
            <person name="Gaudriault S."/>
            <person name="Medigue C."/>
            <person name="Lanois A."/>
            <person name="Powell K."/>
            <person name="Siguier P."/>
            <person name="Vincent R."/>
            <person name="Wingate V."/>
            <person name="Zouine M."/>
            <person name="Glaser P."/>
            <person name="Boemare N."/>
            <person name="Danchin A."/>
            <person name="Kunst F."/>
        </authorList>
    </citation>
    <scope>NUCLEOTIDE SEQUENCE [LARGE SCALE GENOMIC DNA]</scope>
    <source>
        <strain>DSM 15139 / CIP 105565 / TT01</strain>
    </source>
</reference>
<evidence type="ECO:0000255" key="1">
    <source>
        <dbReference type="HAMAP-Rule" id="MF_00544"/>
    </source>
</evidence>
<comment type="catalytic activity">
    <reaction evidence="1">
        <text>L-tryptophan + H2O = indole + pyruvate + NH4(+)</text>
        <dbReference type="Rhea" id="RHEA:19553"/>
        <dbReference type="ChEBI" id="CHEBI:15361"/>
        <dbReference type="ChEBI" id="CHEBI:15377"/>
        <dbReference type="ChEBI" id="CHEBI:16881"/>
        <dbReference type="ChEBI" id="CHEBI:28938"/>
        <dbReference type="ChEBI" id="CHEBI:57912"/>
        <dbReference type="EC" id="4.1.99.1"/>
    </reaction>
</comment>
<comment type="cofactor">
    <cofactor evidence="1">
        <name>pyridoxal 5'-phosphate</name>
        <dbReference type="ChEBI" id="CHEBI:597326"/>
    </cofactor>
</comment>
<comment type="pathway">
    <text evidence="1">Amino-acid degradation; L-tryptophan degradation via pyruvate pathway; indole and pyruvate from L-tryptophan: step 1/1.</text>
</comment>
<comment type="subunit">
    <text evidence="1">Homotetramer.</text>
</comment>
<comment type="similarity">
    <text evidence="1">Belongs to the beta-eliminating lyase family.</text>
</comment>
<accession>Q7N8C9</accession>
<gene>
    <name evidence="1" type="primary">tnaA</name>
    <name type="ordered locus">plu0799</name>
</gene>
<dbReference type="EC" id="4.1.99.1" evidence="1"/>
<dbReference type="EMBL" id="BX571861">
    <property type="protein sequence ID" value="CAE13094.1"/>
    <property type="molecule type" value="Genomic_DNA"/>
</dbReference>
<dbReference type="RefSeq" id="WP_011145173.1">
    <property type="nucleotide sequence ID" value="NC_005126.1"/>
</dbReference>
<dbReference type="SMR" id="Q7N8C9"/>
<dbReference type="STRING" id="243265.plu0799"/>
<dbReference type="GeneID" id="48847090"/>
<dbReference type="KEGG" id="plu:plu0799"/>
<dbReference type="eggNOG" id="COG3033">
    <property type="taxonomic scope" value="Bacteria"/>
</dbReference>
<dbReference type="HOGENOM" id="CLU_047223_0_0_6"/>
<dbReference type="OrthoDB" id="9764079at2"/>
<dbReference type="UniPathway" id="UPA00332">
    <property type="reaction ID" value="UER00452"/>
</dbReference>
<dbReference type="Proteomes" id="UP000002514">
    <property type="component" value="Chromosome"/>
</dbReference>
<dbReference type="GO" id="GO:0009034">
    <property type="term" value="F:tryptophanase activity"/>
    <property type="evidence" value="ECO:0007669"/>
    <property type="project" value="UniProtKB-UniRule"/>
</dbReference>
<dbReference type="CDD" id="cd00617">
    <property type="entry name" value="Tnase_like"/>
    <property type="match status" value="1"/>
</dbReference>
<dbReference type="Gene3D" id="3.90.1150.10">
    <property type="entry name" value="Aspartate Aminotransferase, domain 1"/>
    <property type="match status" value="1"/>
</dbReference>
<dbReference type="Gene3D" id="3.40.640.10">
    <property type="entry name" value="Type I PLP-dependent aspartate aminotransferase-like (Major domain)"/>
    <property type="match status" value="1"/>
</dbReference>
<dbReference type="HAMAP" id="MF_00544">
    <property type="entry name" value="Tryptophanase"/>
    <property type="match status" value="1"/>
</dbReference>
<dbReference type="InterPro" id="IPR001597">
    <property type="entry name" value="ArAA_b-elim_lyase/Thr_aldolase"/>
</dbReference>
<dbReference type="InterPro" id="IPR011166">
    <property type="entry name" value="Beta-eliminating_lyase"/>
</dbReference>
<dbReference type="InterPro" id="IPR015424">
    <property type="entry name" value="PyrdxlP-dep_Trfase"/>
</dbReference>
<dbReference type="InterPro" id="IPR015421">
    <property type="entry name" value="PyrdxlP-dep_Trfase_major"/>
</dbReference>
<dbReference type="InterPro" id="IPR015422">
    <property type="entry name" value="PyrdxlP-dep_Trfase_small"/>
</dbReference>
<dbReference type="InterPro" id="IPR013440">
    <property type="entry name" value="TNase"/>
</dbReference>
<dbReference type="InterPro" id="IPR018176">
    <property type="entry name" value="Tryptophanase_CS"/>
</dbReference>
<dbReference type="NCBIfam" id="NF009709">
    <property type="entry name" value="PRK13238.1"/>
    <property type="match status" value="1"/>
</dbReference>
<dbReference type="NCBIfam" id="TIGR02617">
    <property type="entry name" value="tnaA_trp_ase"/>
    <property type="match status" value="1"/>
</dbReference>
<dbReference type="PANTHER" id="PTHR32325">
    <property type="entry name" value="BETA-ELIMINATING LYASE-LIKE PROTEIN-RELATED"/>
    <property type="match status" value="1"/>
</dbReference>
<dbReference type="PANTHER" id="PTHR32325:SF4">
    <property type="entry name" value="TRYPTOPHANASE"/>
    <property type="match status" value="1"/>
</dbReference>
<dbReference type="Pfam" id="PF01212">
    <property type="entry name" value="Beta_elim_lyase"/>
    <property type="match status" value="1"/>
</dbReference>
<dbReference type="PIRSF" id="PIRSF001386">
    <property type="entry name" value="Trpase"/>
    <property type="match status" value="1"/>
</dbReference>
<dbReference type="SUPFAM" id="SSF53383">
    <property type="entry name" value="PLP-dependent transferases"/>
    <property type="match status" value="1"/>
</dbReference>
<dbReference type="PROSITE" id="PS00853">
    <property type="entry name" value="BETA_ELIM_LYASE"/>
    <property type="match status" value="1"/>
</dbReference>
<organism>
    <name type="scientific">Photorhabdus laumondii subsp. laumondii (strain DSM 15139 / CIP 105565 / TT01)</name>
    <name type="common">Photorhabdus luminescens subsp. laumondii</name>
    <dbReference type="NCBI Taxonomy" id="243265"/>
    <lineage>
        <taxon>Bacteria</taxon>
        <taxon>Pseudomonadati</taxon>
        <taxon>Pseudomonadota</taxon>
        <taxon>Gammaproteobacteria</taxon>
        <taxon>Enterobacterales</taxon>
        <taxon>Morganellaceae</taxon>
        <taxon>Photorhabdus</taxon>
    </lineage>
</organism>